<comment type="function">
    <text evidence="1">Plays a role in viral particle release. Presumably acts by facilitating the fission of the virion bud at the cell surface.</text>
</comment>
<comment type="subcellular location">
    <subcellularLocation>
        <location evidence="1 2">Host cell membrane</location>
        <topology evidence="1">Single-pass membrane protein</topology>
    </subcellularLocation>
</comment>
<comment type="alternative products">
    <event type="alternative initiation"/>
    <isoform>
        <id>P0DOH3-1</id>
        <name>Glyco-Gag protein</name>
        <sequence type="displayed"/>
    </isoform>
    <isoform>
        <id>P10262-1</id>
        <name>Gag polyprotein</name>
        <sequence type="external"/>
    </isoform>
</comment>
<comment type="PTM">
    <text evidence="1">Glycosylated by host.</text>
</comment>
<comment type="PTM">
    <text evidence="1">Cleaved by host near the middle of the molecule, releasing the c-terminal half containing capsid and nucleoprotein domains op GAG.</text>
</comment>
<accession>P0DOH3</accession>
<evidence type="ECO:0000250" key="1">
    <source>
        <dbReference type="UniProtKB" id="P0DOG8"/>
    </source>
</evidence>
<evidence type="ECO:0000255" key="2"/>
<evidence type="ECO:0000255" key="3">
    <source>
        <dbReference type="PROSITE-ProRule" id="PRU00498"/>
    </source>
</evidence>
<evidence type="ECO:0000256" key="4">
    <source>
        <dbReference type="SAM" id="MobiDB-lite"/>
    </source>
</evidence>
<evidence type="ECO:0000305" key="5"/>
<name>GGAG_FLV</name>
<feature type="chain" id="PRO_0000441137" description="Glyco-Gag protein">
    <location>
        <begin position="1"/>
        <end position="580"/>
    </location>
</feature>
<feature type="topological domain" description="Cytoplasmic" evidence="5">
    <location>
        <begin position="1"/>
        <end position="51"/>
    </location>
</feature>
<feature type="transmembrane region" description="Helical" evidence="2">
    <location>
        <begin position="52"/>
        <end position="72"/>
    </location>
</feature>
<feature type="topological domain" description="Extracellular" evidence="5">
    <location>
        <begin position="73"/>
        <end position="580"/>
    </location>
</feature>
<feature type="region of interest" description="Disordered" evidence="4">
    <location>
        <begin position="171"/>
        <end position="282"/>
    </location>
</feature>
<feature type="region of interest" description="Disordered" evidence="4">
    <location>
        <begin position="491"/>
        <end position="514"/>
    </location>
</feature>
<feature type="region of interest" description="Disordered" evidence="4">
    <location>
        <begin position="560"/>
        <end position="580"/>
    </location>
</feature>
<feature type="compositionally biased region" description="Pro residues" evidence="4">
    <location>
        <begin position="174"/>
        <end position="193"/>
    </location>
</feature>
<feature type="compositionally biased region" description="Low complexity" evidence="4">
    <location>
        <begin position="194"/>
        <end position="203"/>
    </location>
</feature>
<feature type="compositionally biased region" description="Pro residues" evidence="4">
    <location>
        <begin position="204"/>
        <end position="220"/>
    </location>
</feature>
<feature type="compositionally biased region" description="Pro residues" evidence="4">
    <location>
        <begin position="230"/>
        <end position="245"/>
    </location>
</feature>
<feature type="compositionally biased region" description="Basic and acidic residues" evidence="4">
    <location>
        <begin position="491"/>
        <end position="508"/>
    </location>
</feature>
<feature type="compositionally biased region" description="Polar residues" evidence="4">
    <location>
        <begin position="571"/>
        <end position="580"/>
    </location>
</feature>
<feature type="glycosylation site" description="N-linked (GlcNAc...) asparagine; by host" evidence="3">
    <location>
        <position position="134"/>
    </location>
</feature>
<feature type="glycosylation site" description="N-linked (GlcNAc...) asparagine; by host" evidence="3">
    <location>
        <position position="572"/>
    </location>
</feature>
<organism>
    <name type="scientific">Feline leukemia virus</name>
    <dbReference type="NCBI Taxonomy" id="11768"/>
    <lineage>
        <taxon>Viruses</taxon>
        <taxon>Riboviria</taxon>
        <taxon>Pararnavirae</taxon>
        <taxon>Artverviricota</taxon>
        <taxon>Revtraviricetes</taxon>
        <taxon>Ortervirales</taxon>
        <taxon>Retroviridae</taxon>
        <taxon>Orthoretrovirinae</taxon>
        <taxon>Gammaretrovirus</taxon>
    </lineage>
</organism>
<protein>
    <recommendedName>
        <fullName>Glyco-Gag protein</fullName>
    </recommendedName>
    <alternativeName>
        <fullName>Gross cell surface antigen</fullName>
    </alternativeName>
    <alternativeName>
        <fullName>glycosylated Pr80 gag</fullName>
        <shortName>gPr80 Gag</shortName>
        <shortName>gag-gPr80</shortName>
    </alternativeName>
</protein>
<reference key="1">
    <citation type="journal article" date="1984" name="J. Virol.">
        <title>Nucleotide sequence of the gag gene and gag-pol junction of feline leukemia virus.</title>
        <authorList>
            <person name="Laprevotte I."/>
            <person name="Hampe A."/>
            <person name="Sherr C.J."/>
            <person name="Galibert F."/>
        </authorList>
    </citation>
    <scope>NUCLEOTIDE SEQUENCE [GENOMIC RNA]</scope>
</reference>
<dbReference type="EMBL" id="K01803">
    <property type="protein sequence ID" value="AAA43055.1"/>
    <property type="molecule type" value="Genomic_RNA"/>
</dbReference>
<dbReference type="SMR" id="P0DOH3"/>
<dbReference type="GO" id="GO:0020002">
    <property type="term" value="C:host cell plasma membrane"/>
    <property type="evidence" value="ECO:0007669"/>
    <property type="project" value="UniProtKB-SubCell"/>
</dbReference>
<dbReference type="GO" id="GO:0016020">
    <property type="term" value="C:membrane"/>
    <property type="evidence" value="ECO:0007669"/>
    <property type="project" value="UniProtKB-KW"/>
</dbReference>
<dbReference type="GO" id="GO:0003676">
    <property type="term" value="F:nucleic acid binding"/>
    <property type="evidence" value="ECO:0007669"/>
    <property type="project" value="InterPro"/>
</dbReference>
<dbReference type="GO" id="GO:0008270">
    <property type="term" value="F:zinc ion binding"/>
    <property type="evidence" value="ECO:0007669"/>
    <property type="project" value="InterPro"/>
</dbReference>
<dbReference type="GO" id="GO:0019068">
    <property type="term" value="P:virion assembly"/>
    <property type="evidence" value="ECO:0007669"/>
    <property type="project" value="InterPro"/>
</dbReference>
<dbReference type="Gene3D" id="1.10.150.180">
    <property type="entry name" value="Gamma-retroviral matrix domain"/>
    <property type="match status" value="1"/>
</dbReference>
<dbReference type="Gene3D" id="1.10.375.10">
    <property type="entry name" value="Human Immunodeficiency Virus Type 1 Capsid Protein"/>
    <property type="match status" value="1"/>
</dbReference>
<dbReference type="Gene3D" id="4.10.60.10">
    <property type="entry name" value="Zinc finger, CCHC-type"/>
    <property type="match status" value="1"/>
</dbReference>
<dbReference type="InterPro" id="IPR000840">
    <property type="entry name" value="G_retro_matrix"/>
</dbReference>
<dbReference type="InterPro" id="IPR036946">
    <property type="entry name" value="G_retro_matrix_sf"/>
</dbReference>
<dbReference type="InterPro" id="IPR003036">
    <property type="entry name" value="Gag_P30"/>
</dbReference>
<dbReference type="InterPro" id="IPR008919">
    <property type="entry name" value="Retrov_capsid_N"/>
</dbReference>
<dbReference type="InterPro" id="IPR050462">
    <property type="entry name" value="Retroviral_Gag-Pol_poly"/>
</dbReference>
<dbReference type="InterPro" id="IPR010999">
    <property type="entry name" value="Retrovr_matrix"/>
</dbReference>
<dbReference type="InterPro" id="IPR001878">
    <property type="entry name" value="Znf_CCHC"/>
</dbReference>
<dbReference type="InterPro" id="IPR036875">
    <property type="entry name" value="Znf_CCHC_sf"/>
</dbReference>
<dbReference type="PANTHER" id="PTHR33166">
    <property type="entry name" value="GAG_P30 DOMAIN-CONTAINING PROTEIN"/>
    <property type="match status" value="1"/>
</dbReference>
<dbReference type="Pfam" id="PF01140">
    <property type="entry name" value="Gag_MA"/>
    <property type="match status" value="1"/>
</dbReference>
<dbReference type="Pfam" id="PF02093">
    <property type="entry name" value="Gag_p30"/>
    <property type="match status" value="1"/>
</dbReference>
<dbReference type="Pfam" id="PF00098">
    <property type="entry name" value="zf-CCHC"/>
    <property type="match status" value="1"/>
</dbReference>
<dbReference type="SMART" id="SM00343">
    <property type="entry name" value="ZnF_C2HC"/>
    <property type="match status" value="1"/>
</dbReference>
<dbReference type="SUPFAM" id="SSF47836">
    <property type="entry name" value="Retroviral matrix proteins"/>
    <property type="match status" value="1"/>
</dbReference>
<dbReference type="SUPFAM" id="SSF47943">
    <property type="entry name" value="Retrovirus capsid protein, N-terminal core domain"/>
    <property type="match status" value="1"/>
</dbReference>
<dbReference type="SUPFAM" id="SSF57756">
    <property type="entry name" value="Retrovirus zinc finger-like domains"/>
    <property type="match status" value="1"/>
</dbReference>
<dbReference type="PROSITE" id="PS50158">
    <property type="entry name" value="ZF_CCHC"/>
    <property type="match status" value="1"/>
</dbReference>
<proteinExistence type="inferred from homology"/>
<keyword id="KW-0024">Alternative initiation</keyword>
<keyword id="KW-0325">Glycoprotein</keyword>
<keyword id="KW-1032">Host cell membrane</keyword>
<keyword id="KW-1043">Host membrane</keyword>
<keyword id="KW-0472">Membrane</keyword>
<keyword id="KW-0812">Transmembrane</keyword>
<keyword id="KW-1133">Transmembrane helix</keyword>
<organismHost>
    <name type="scientific">Felidae</name>
    <name type="common">cat family</name>
    <dbReference type="NCBI Taxonomy" id="9681"/>
</organismHost>
<sequence length="580" mass="65195">MSGASSGTAIGAHLFGVSPEYRVLIGDGGAGPSKSLSEVSFSVWYRSRAARLVILCLVASFLVPCLTFLIAEAVMGQTVTTPLSLTLDHWSEVRARAHNQGVEVRKKKWITLCEAEWVMMNVGWPREGTFSLDNISQVEKKIFAPGPHGHPDQVPYITTWRSLATDPPSWVRPFLPPPKPPTPLPQPLSPQPSAPLTSSLYPVVPKPDPPKPPVLPPDPSSPLIDLLTEEPPPYPGGHGPPPSGPRTPAASPIASRLRERRENPAEESQALPLREGPNNRPQYWPFSASDLYNWKSHNPPFSQDPVALTNLIESILVTHQPTWDDCQQLLQALLTGEERQRVLLEARKQVPGEDGRPTQLPNVIDETFPLTRPNWDFATPAGREHLRLYRQLLLAGLRGAARRPTNLAQVKQVVQGKEETPAAFLERLKEAYRMYTPYDPEDPGQAASVILSFIYQSSPDIRNKLQRLEGLQGFTLSDLLKEAEKIYNKRETPEEREERLWQRQEERDKKRHKEMTKVLATVVAQNRDKDREENKLGDQRKIPLGKDQCAYCKEKGHWVRDCPKRPRKKPANSTLLNLED</sequence>